<gene>
    <name type="primary">Scgb1a1</name>
    <name type="synonym">Cc10</name>
    <name type="synonym">Ugb</name>
    <name type="synonym">Utg</name>
</gene>
<dbReference type="EMBL" id="J05536">
    <property type="protein sequence ID" value="AAA41817.1"/>
    <property type="molecule type" value="mRNA"/>
</dbReference>
<dbReference type="EMBL" id="BC069174">
    <property type="protein sequence ID" value="AAH69174.1"/>
    <property type="molecule type" value="mRNA"/>
</dbReference>
<dbReference type="EMBL" id="X51318">
    <property type="protein sequence ID" value="CAA35701.1"/>
    <property type="molecule type" value="Genomic_DNA"/>
</dbReference>
<dbReference type="PIR" id="A36581">
    <property type="entry name" value="A36581"/>
</dbReference>
<dbReference type="RefSeq" id="NP_037183.1">
    <property type="nucleotide sequence ID" value="NM_013051.1"/>
</dbReference>
<dbReference type="PDB" id="1CCD">
    <property type="method" value="X-ray"/>
    <property type="resolution" value="3.00 A"/>
    <property type="chains" value="A=20-96"/>
</dbReference>
<dbReference type="PDB" id="1UTR">
    <property type="method" value="NMR"/>
    <property type="chains" value="A/B=1-96"/>
</dbReference>
<dbReference type="PDBsum" id="1CCD"/>
<dbReference type="PDBsum" id="1UTR"/>
<dbReference type="SMR" id="P17559"/>
<dbReference type="FunCoup" id="P17559">
    <property type="interactions" value="3"/>
</dbReference>
<dbReference type="STRING" id="10116.ENSRNOP00000027342"/>
<dbReference type="iPTMnet" id="P17559"/>
<dbReference type="PhosphoSitePlus" id="P17559"/>
<dbReference type="PaxDb" id="10116-ENSRNOP00000027342"/>
<dbReference type="Ensembl" id="ENSRNOT00000027342.4">
    <property type="protein sequence ID" value="ENSRNOP00000027342.2"/>
    <property type="gene ID" value="ENSRNOG00000020196.4"/>
</dbReference>
<dbReference type="GeneID" id="25575"/>
<dbReference type="KEGG" id="rno:25575"/>
<dbReference type="UCSC" id="RGD:3934">
    <property type="organism name" value="rat"/>
</dbReference>
<dbReference type="AGR" id="RGD:3934"/>
<dbReference type="CTD" id="7356"/>
<dbReference type="RGD" id="3934">
    <property type="gene designation" value="Scgb1a1"/>
</dbReference>
<dbReference type="eggNOG" id="ENOG502SXFT">
    <property type="taxonomic scope" value="Eukaryota"/>
</dbReference>
<dbReference type="GeneTree" id="ENSGT00940000155073"/>
<dbReference type="HOGENOM" id="CLU_166234_1_0_1"/>
<dbReference type="InParanoid" id="P17559"/>
<dbReference type="OMA" id="MKIAITI"/>
<dbReference type="OrthoDB" id="9585556at2759"/>
<dbReference type="PhylomeDB" id="P17559"/>
<dbReference type="TreeFam" id="TF338407"/>
<dbReference type="EvolutionaryTrace" id="P17559"/>
<dbReference type="PRO" id="PR:P17559"/>
<dbReference type="Proteomes" id="UP000002494">
    <property type="component" value="Chromosome 1"/>
</dbReference>
<dbReference type="Bgee" id="ENSRNOG00000020196">
    <property type="expression patterns" value="Expressed in lung and 13 other cell types or tissues"/>
</dbReference>
<dbReference type="GO" id="GO:0005737">
    <property type="term" value="C:cytoplasm"/>
    <property type="evidence" value="ECO:0000266"/>
    <property type="project" value="RGD"/>
</dbReference>
<dbReference type="GO" id="GO:0005615">
    <property type="term" value="C:extracellular space"/>
    <property type="evidence" value="ECO:0000314"/>
    <property type="project" value="RGD"/>
</dbReference>
<dbReference type="GO" id="GO:0005635">
    <property type="term" value="C:nuclear envelope"/>
    <property type="evidence" value="ECO:0000314"/>
    <property type="project" value="RGD"/>
</dbReference>
<dbReference type="GO" id="GO:0030141">
    <property type="term" value="C:secretory granule"/>
    <property type="evidence" value="ECO:0000314"/>
    <property type="project" value="RGD"/>
</dbReference>
<dbReference type="GO" id="GO:0019834">
    <property type="term" value="F:phospholipase A2 inhibitor activity"/>
    <property type="evidence" value="ECO:0007669"/>
    <property type="project" value="UniProtKB-KW"/>
</dbReference>
<dbReference type="GO" id="GO:0097160">
    <property type="term" value="F:polychlorinated biphenyl binding"/>
    <property type="evidence" value="ECO:0000353"/>
    <property type="project" value="RGD"/>
</dbReference>
<dbReference type="GO" id="GO:0032696">
    <property type="term" value="P:negative regulation of interleukin-13 production"/>
    <property type="evidence" value="ECO:0000266"/>
    <property type="project" value="RGD"/>
</dbReference>
<dbReference type="GO" id="GO:0032713">
    <property type="term" value="P:negative regulation of interleukin-4 production"/>
    <property type="evidence" value="ECO:0000266"/>
    <property type="project" value="RGD"/>
</dbReference>
<dbReference type="GO" id="GO:0032714">
    <property type="term" value="P:negative regulation of interleukin-5 production"/>
    <property type="evidence" value="ECO:0000266"/>
    <property type="project" value="RGD"/>
</dbReference>
<dbReference type="GO" id="GO:0042130">
    <property type="term" value="P:negative regulation of T cell proliferation"/>
    <property type="evidence" value="ECO:0000266"/>
    <property type="project" value="RGD"/>
</dbReference>
<dbReference type="GO" id="GO:0000122">
    <property type="term" value="P:negative regulation of transcription by RNA polymerase II"/>
    <property type="evidence" value="ECO:0000266"/>
    <property type="project" value="RGD"/>
</dbReference>
<dbReference type="GO" id="GO:0032689">
    <property type="term" value="P:negative regulation of type II interferon production"/>
    <property type="evidence" value="ECO:0000266"/>
    <property type="project" value="RGD"/>
</dbReference>
<dbReference type="GO" id="GO:0050727">
    <property type="term" value="P:regulation of inflammatory response"/>
    <property type="evidence" value="ECO:0000266"/>
    <property type="project" value="RGD"/>
</dbReference>
<dbReference type="GO" id="GO:0043488">
    <property type="term" value="P:regulation of mRNA stability"/>
    <property type="evidence" value="ECO:0000266"/>
    <property type="project" value="RGD"/>
</dbReference>
<dbReference type="GO" id="GO:0034097">
    <property type="term" value="P:response to cytokine"/>
    <property type="evidence" value="ECO:0000315"/>
    <property type="project" value="RGD"/>
</dbReference>
<dbReference type="GO" id="GO:0071774">
    <property type="term" value="P:response to fibroblast growth factor"/>
    <property type="evidence" value="ECO:0000270"/>
    <property type="project" value="RGD"/>
</dbReference>
<dbReference type="GO" id="GO:0051384">
    <property type="term" value="P:response to glucocorticoid"/>
    <property type="evidence" value="ECO:0000270"/>
    <property type="project" value="RGD"/>
</dbReference>
<dbReference type="GO" id="GO:0032496">
    <property type="term" value="P:response to lipopolysaccharide"/>
    <property type="evidence" value="ECO:0000270"/>
    <property type="project" value="RGD"/>
</dbReference>
<dbReference type="GO" id="GO:0010193">
    <property type="term" value="P:response to ozone"/>
    <property type="evidence" value="ECO:0000270"/>
    <property type="project" value="RGD"/>
</dbReference>
<dbReference type="GO" id="GO:0034021">
    <property type="term" value="P:response to silicon dioxide"/>
    <property type="evidence" value="ECO:0000270"/>
    <property type="project" value="RGD"/>
</dbReference>
<dbReference type="GO" id="GO:0009410">
    <property type="term" value="P:response to xenobiotic stimulus"/>
    <property type="evidence" value="ECO:0000270"/>
    <property type="project" value="RGD"/>
</dbReference>
<dbReference type="GO" id="GO:0007165">
    <property type="term" value="P:signal transduction"/>
    <property type="evidence" value="ECO:0007669"/>
    <property type="project" value="InterPro"/>
</dbReference>
<dbReference type="GO" id="GO:0042098">
    <property type="term" value="P:T cell proliferation"/>
    <property type="evidence" value="ECO:0000266"/>
    <property type="project" value="RGD"/>
</dbReference>
<dbReference type="CDD" id="cd00633">
    <property type="entry name" value="Secretoglobin"/>
    <property type="match status" value="1"/>
</dbReference>
<dbReference type="FunFam" id="1.10.210.10:FF:000001">
    <property type="entry name" value="Uteroglobin"/>
    <property type="match status" value="1"/>
</dbReference>
<dbReference type="Gene3D" id="1.10.210.10">
    <property type="entry name" value="Secretoglobin"/>
    <property type="match status" value="1"/>
</dbReference>
<dbReference type="InterPro" id="IPR016126">
    <property type="entry name" value="Secretoglobin"/>
</dbReference>
<dbReference type="InterPro" id="IPR043215">
    <property type="entry name" value="Secretoglobin_1C-like"/>
</dbReference>
<dbReference type="InterPro" id="IPR035960">
    <property type="entry name" value="Secretoglobin_sf"/>
</dbReference>
<dbReference type="InterPro" id="IPR000329">
    <property type="entry name" value="Uteroglobin"/>
</dbReference>
<dbReference type="PANTHER" id="PTHR10136">
    <property type="entry name" value="SECRETOGLOBIN FAMILY 1 MEMBER"/>
    <property type="match status" value="1"/>
</dbReference>
<dbReference type="PANTHER" id="PTHR10136:SF6">
    <property type="entry name" value="UTEROGLOBIN"/>
    <property type="match status" value="1"/>
</dbReference>
<dbReference type="Pfam" id="PF01099">
    <property type="entry name" value="Uteroglobin"/>
    <property type="match status" value="1"/>
</dbReference>
<dbReference type="PRINTS" id="PR00486">
    <property type="entry name" value="UTEROGLOBIN"/>
</dbReference>
<dbReference type="SMART" id="SM00096">
    <property type="entry name" value="UTG"/>
    <property type="match status" value="1"/>
</dbReference>
<dbReference type="SUPFAM" id="SSF48201">
    <property type="entry name" value="Uteroglobin-like"/>
    <property type="match status" value="1"/>
</dbReference>
<dbReference type="PROSITE" id="PS51311">
    <property type="entry name" value="SCGB"/>
    <property type="match status" value="1"/>
</dbReference>
<sequence length="96" mass="10449">MKIAITITVLMLSICCSSASSDICPGFLQVLEALLLGSESNYEAALKPFNPASDLQNAGTQLKRLVDTLPQETRINIVKLTEKILTSPLCEQDLRV</sequence>
<proteinExistence type="evidence at protein level"/>
<feature type="signal peptide">
    <location>
        <begin position="1"/>
        <end position="19"/>
    </location>
</feature>
<feature type="chain" id="PRO_0000036367" description="Uteroglobin">
    <location>
        <begin position="20"/>
        <end position="96"/>
    </location>
</feature>
<feature type="disulfide bond" description="Interchain (with C-90)">
    <location>
        <position position="24"/>
    </location>
</feature>
<feature type="disulfide bond" description="Interchain (with C-24)">
    <location>
        <position position="90"/>
    </location>
</feature>
<feature type="helix" evidence="4">
    <location>
        <begin position="25"/>
        <end position="34"/>
    </location>
</feature>
<feature type="helix" evidence="4">
    <location>
        <begin position="39"/>
        <end position="46"/>
    </location>
</feature>
<feature type="turn" evidence="4">
    <location>
        <begin position="47"/>
        <end position="49"/>
    </location>
</feature>
<feature type="helix" evidence="4">
    <location>
        <begin position="53"/>
        <end position="68"/>
    </location>
</feature>
<feature type="helix" evidence="4">
    <location>
        <begin position="71"/>
        <end position="84"/>
    </location>
</feature>
<feature type="turn" evidence="4">
    <location>
        <begin position="88"/>
        <end position="90"/>
    </location>
</feature>
<accession>P17559</accession>
<comment type="function">
    <text>Binds phosphatidylcholine, phosphatidylinositol, polychlorinated biphenyls (PCB) and weakly progesterone, potent inhibitor of phospholipase A2.</text>
</comment>
<comment type="subunit">
    <text evidence="1 2">Antiparallel homodimer; disulfide-linked (PubMed:1560460). Interaction with LMBR1L is controversial (By similarity).</text>
</comment>
<comment type="subcellular location">
    <subcellularLocation>
        <location>Secreted</location>
    </subcellularLocation>
</comment>
<comment type="tissue specificity">
    <text>Club cells (nonciliated cells of the surface epithelium of the pulmonary airways).</text>
</comment>
<comment type="induction">
    <text>By glucocorticoids.</text>
</comment>
<comment type="similarity">
    <text evidence="3">Belongs to the secretoglobin family.</text>
</comment>
<protein>
    <recommendedName>
        <fullName>Uteroglobin</fullName>
    </recommendedName>
    <alternativeName>
        <fullName>Club cell phospholipid-binding protein</fullName>
        <shortName>CCPBP</shortName>
    </alternativeName>
    <alternativeName>
        <fullName>Club cells 10 kDa secretory protein</fullName>
        <shortName>CC10</shortName>
    </alternativeName>
    <alternativeName>
        <fullName>PCB-binding protein</fullName>
    </alternativeName>
    <alternativeName>
        <fullName>Secretoglobin family 1A member 1</fullName>
    </alternativeName>
</protein>
<name>UTER_RAT</name>
<reference key="1">
    <citation type="journal article" date="1990" name="Prog. Respir. Res.">
        <title>Clara cell secretory (10 kDaltons) protein: amino acid and cDNA nucleotide sequences and developmental expression.</title>
        <authorList>
            <person name="Katyal S.L."/>
            <person name="Singh G."/>
            <person name="Brown W.E."/>
            <person name="Kennedy A.L."/>
            <person name="Squeglia N."/>
            <person name="Wong-Chong M.-L."/>
        </authorList>
    </citation>
    <scope>NUCLEOTIDE SEQUENCE [MRNA]</scope>
</reference>
<reference key="2">
    <citation type="journal article" date="1990" name="J. Biol. Chem.">
        <title>Cloning, structure, and expression of a rat binding protein for polychlorinated biphenyls. Homology to the hormonally regulated progesterone-binding protein uteroglobin.</title>
        <authorList>
            <person name="Nordlund-Moeller L."/>
            <person name="Andersson O."/>
            <person name="Ahlgren R."/>
            <person name="Schilling J."/>
            <person name="Gillner M."/>
            <person name="Gustafsson J.-A."/>
            <person name="Lund J."/>
        </authorList>
    </citation>
    <scope>NUCLEOTIDE SEQUENCE [MRNA]</scope>
</reference>
<reference key="3">
    <citation type="journal article" date="2004" name="Genome Res.">
        <title>The status, quality, and expansion of the NIH full-length cDNA project: the Mammalian Gene Collection (MGC).</title>
        <authorList>
            <consortium name="The MGC Project Team"/>
        </authorList>
    </citation>
    <scope>NUCLEOTIDE SEQUENCE [LARGE SCALE MRNA]</scope>
    <source>
        <tissue>Lung</tissue>
    </source>
</reference>
<reference key="4">
    <citation type="journal article" date="1990" name="Nucleic Acids Res.">
        <title>Tissue-specific expression, hormonal regulation and 5'-flanking gene region of the rat Clara cell 10 kDa protein: comparison to rabbit uteroglobin.</title>
        <authorList>
            <person name="Hagen G."/>
            <person name="Wolf M."/>
            <person name="Katyal S.L."/>
            <person name="Singh G."/>
            <person name="Beato M."/>
            <person name="Suske G."/>
        </authorList>
    </citation>
    <scope>NUCLEOTIDE SEQUENCE [GENOMIC DNA] OF 1-18</scope>
</reference>
<reference key="5">
    <citation type="journal article" date="1992" name="J. Mol. Biol.">
        <title>Refined structure of rat Clara cell 17 kDa protein at 3.0-A resolution.</title>
        <authorList>
            <person name="Umland T.C."/>
            <person name="Swaminathan S."/>
            <person name="Furey W."/>
            <person name="Singh G."/>
            <person name="Pletcher J."/>
            <person name="Sax M."/>
        </authorList>
    </citation>
    <scope>X-RAY CRYSTALLOGRAPHY (3.0 ANGSTROMS) OF 20-96</scope>
    <scope>SUBUNIT</scope>
</reference>
<reference key="6">
    <citation type="journal article" date="1995" name="Nat. Struct. Biol.">
        <title>Solution structure of a mammalian PCB-binding protein in complex with a PCB.</title>
        <authorList>
            <person name="Haerd T."/>
            <person name="Barnes H.J."/>
            <person name="Larsson C."/>
            <person name="Gustafsson J.-A."/>
            <person name="Lund J."/>
        </authorList>
    </citation>
    <scope>STRUCTURE BY NMR</scope>
</reference>
<organism>
    <name type="scientific">Rattus norvegicus</name>
    <name type="common">Rat</name>
    <dbReference type="NCBI Taxonomy" id="10116"/>
    <lineage>
        <taxon>Eukaryota</taxon>
        <taxon>Metazoa</taxon>
        <taxon>Chordata</taxon>
        <taxon>Craniata</taxon>
        <taxon>Vertebrata</taxon>
        <taxon>Euteleostomi</taxon>
        <taxon>Mammalia</taxon>
        <taxon>Eutheria</taxon>
        <taxon>Euarchontoglires</taxon>
        <taxon>Glires</taxon>
        <taxon>Rodentia</taxon>
        <taxon>Myomorpha</taxon>
        <taxon>Muroidea</taxon>
        <taxon>Muridae</taxon>
        <taxon>Murinae</taxon>
        <taxon>Rattus</taxon>
    </lineage>
</organism>
<keyword id="KW-0002">3D-structure</keyword>
<keyword id="KW-1015">Disulfide bond</keyword>
<keyword id="KW-0593">Phospholipase A2 inhibitor</keyword>
<keyword id="KW-1185">Reference proteome</keyword>
<keyword id="KW-0964">Secreted</keyword>
<keyword id="KW-0732">Signal</keyword>
<evidence type="ECO:0000250" key="1">
    <source>
        <dbReference type="UniProtKB" id="P11684"/>
    </source>
</evidence>
<evidence type="ECO:0000269" key="2">
    <source>
    </source>
</evidence>
<evidence type="ECO:0000305" key="3"/>
<evidence type="ECO:0007829" key="4">
    <source>
        <dbReference type="PDB" id="1CCD"/>
    </source>
</evidence>